<comment type="function">
    <text evidence="2">With S4 and S5 plays an important role in translational accuracy.</text>
</comment>
<comment type="function">
    <text evidence="2">Interacts with and stabilizes bases of the 16S rRNA that are involved in tRNA selection in the A site and with the mRNA backbone. Located at the interface of the 30S and 50S subunits, it traverses the body of the 30S subunit contacting proteins on the other side and probably holding the rRNA structure together. The combined cluster of proteins S8, S12 and S17 appears to hold together the shoulder and platform of the 30S subunit.</text>
</comment>
<comment type="subunit">
    <text evidence="2">Part of the 30S ribosomal subunit. Contacts proteins S8 and S17. May interact with IF1 in the 30S initiation complex.</text>
</comment>
<comment type="similarity">
    <text evidence="2">Belongs to the universal ribosomal protein uS12 family.</text>
</comment>
<name>RS12_TREPR</name>
<sequence>MPTLNQLVRQGRRRFEARSKSPALRGCPQLRGVCTKVYTTTPKKPNSALRKVAKVRLSNRLEVISYIGGEGHNLQEHSMVLVRGGRVKDLPGVRYHIVRGALDAGGVRERRRSRSKYGAKMPRSAA</sequence>
<gene>
    <name evidence="2" type="primary">rpsL</name>
    <name evidence="2" type="synonym">rps12</name>
</gene>
<organism>
    <name type="scientific">Tremblaya princeps</name>
    <dbReference type="NCBI Taxonomy" id="189385"/>
    <lineage>
        <taxon>Bacteria</taxon>
        <taxon>Pseudomonadati</taxon>
        <taxon>Pseudomonadota</taxon>
        <taxon>Betaproteobacteria</taxon>
        <taxon>Candidatus Tremblaya</taxon>
    </lineage>
</organism>
<proteinExistence type="inferred from homology"/>
<evidence type="ECO:0000250" key="1"/>
<evidence type="ECO:0000255" key="2">
    <source>
        <dbReference type="HAMAP-Rule" id="MF_00403"/>
    </source>
</evidence>
<evidence type="ECO:0000256" key="3">
    <source>
        <dbReference type="SAM" id="MobiDB-lite"/>
    </source>
</evidence>
<evidence type="ECO:0000305" key="4"/>
<protein>
    <recommendedName>
        <fullName evidence="2">Small ribosomal subunit protein uS12</fullName>
    </recommendedName>
    <alternativeName>
        <fullName evidence="4">30S ribosomal protein S12</fullName>
    </alternativeName>
</protein>
<feature type="chain" id="PRO_0000146200" description="Small ribosomal subunit protein uS12">
    <location>
        <begin position="1"/>
        <end position="126"/>
    </location>
</feature>
<feature type="region of interest" description="Disordered" evidence="3">
    <location>
        <begin position="106"/>
        <end position="126"/>
    </location>
</feature>
<feature type="modified residue" description="3-methylthioaspartic acid" evidence="1">
    <location>
        <position position="89"/>
    </location>
</feature>
<keyword id="KW-0488">Methylation</keyword>
<keyword id="KW-0687">Ribonucleoprotein</keyword>
<keyword id="KW-0689">Ribosomal protein</keyword>
<keyword id="KW-0694">RNA-binding</keyword>
<keyword id="KW-0699">rRNA-binding</keyword>
<keyword id="KW-0820">tRNA-binding</keyword>
<reference key="1">
    <citation type="journal article" date="2002" name="Appl. Environ. Microbiol.">
        <title>The genetic properties of the primary endosymbionts of mealybugs differ from those of other endosymbionts of plant sap-sucking insects.</title>
        <authorList>
            <person name="Baumann L."/>
            <person name="Thao M.L."/>
            <person name="Hess J.M."/>
            <person name="Johnson M.W."/>
            <person name="Baumann P."/>
        </authorList>
    </citation>
    <scope>NUCLEOTIDE SEQUENCE [GENOMIC DNA]</scope>
</reference>
<dbReference type="EMBL" id="AF481103">
    <property type="protein sequence ID" value="AAM76002.1"/>
    <property type="molecule type" value="Genomic_DNA"/>
</dbReference>
<dbReference type="SMR" id="Q8KTP6"/>
<dbReference type="STRING" id="1053648.TCP_116"/>
<dbReference type="GO" id="GO:0015935">
    <property type="term" value="C:small ribosomal subunit"/>
    <property type="evidence" value="ECO:0007669"/>
    <property type="project" value="InterPro"/>
</dbReference>
<dbReference type="GO" id="GO:0019843">
    <property type="term" value="F:rRNA binding"/>
    <property type="evidence" value="ECO:0007669"/>
    <property type="project" value="UniProtKB-UniRule"/>
</dbReference>
<dbReference type="GO" id="GO:0003735">
    <property type="term" value="F:structural constituent of ribosome"/>
    <property type="evidence" value="ECO:0007669"/>
    <property type="project" value="InterPro"/>
</dbReference>
<dbReference type="GO" id="GO:0000049">
    <property type="term" value="F:tRNA binding"/>
    <property type="evidence" value="ECO:0007669"/>
    <property type="project" value="UniProtKB-UniRule"/>
</dbReference>
<dbReference type="GO" id="GO:0006412">
    <property type="term" value="P:translation"/>
    <property type="evidence" value="ECO:0007669"/>
    <property type="project" value="UniProtKB-UniRule"/>
</dbReference>
<dbReference type="CDD" id="cd03368">
    <property type="entry name" value="Ribosomal_S12"/>
    <property type="match status" value="1"/>
</dbReference>
<dbReference type="FunFam" id="2.40.50.140:FF:000001">
    <property type="entry name" value="30S ribosomal protein S12"/>
    <property type="match status" value="1"/>
</dbReference>
<dbReference type="Gene3D" id="2.40.50.140">
    <property type="entry name" value="Nucleic acid-binding proteins"/>
    <property type="match status" value="1"/>
</dbReference>
<dbReference type="HAMAP" id="MF_00403_B">
    <property type="entry name" value="Ribosomal_uS12_B"/>
    <property type="match status" value="1"/>
</dbReference>
<dbReference type="InterPro" id="IPR012340">
    <property type="entry name" value="NA-bd_OB-fold"/>
</dbReference>
<dbReference type="InterPro" id="IPR006032">
    <property type="entry name" value="Ribosomal_uS12"/>
</dbReference>
<dbReference type="InterPro" id="IPR005679">
    <property type="entry name" value="Ribosomal_uS12_bac"/>
</dbReference>
<dbReference type="NCBIfam" id="TIGR00981">
    <property type="entry name" value="rpsL_bact"/>
    <property type="match status" value="1"/>
</dbReference>
<dbReference type="PANTHER" id="PTHR11652">
    <property type="entry name" value="30S RIBOSOMAL PROTEIN S12 FAMILY MEMBER"/>
    <property type="match status" value="1"/>
</dbReference>
<dbReference type="Pfam" id="PF00164">
    <property type="entry name" value="Ribosom_S12_S23"/>
    <property type="match status" value="1"/>
</dbReference>
<dbReference type="PIRSF" id="PIRSF002133">
    <property type="entry name" value="Ribosomal_S12/S23"/>
    <property type="match status" value="1"/>
</dbReference>
<dbReference type="PRINTS" id="PR01034">
    <property type="entry name" value="RIBOSOMALS12"/>
</dbReference>
<dbReference type="SUPFAM" id="SSF50249">
    <property type="entry name" value="Nucleic acid-binding proteins"/>
    <property type="match status" value="1"/>
</dbReference>
<dbReference type="PROSITE" id="PS00055">
    <property type="entry name" value="RIBOSOMAL_S12"/>
    <property type="match status" value="1"/>
</dbReference>
<accession>Q8KTP6</accession>